<proteinExistence type="evidence at protein level"/>
<dbReference type="EMBL" id="AJ001309">
    <property type="protein sequence ID" value="CAA04669.1"/>
    <property type="molecule type" value="mRNA"/>
</dbReference>
<dbReference type="EMBL" id="Y13350">
    <property type="protein sequence ID" value="CAA73791.1"/>
    <property type="molecule type" value="mRNA"/>
</dbReference>
<dbReference type="EMBL" id="AF011793">
    <property type="protein sequence ID" value="AAB69313.1"/>
    <property type="molecule type" value="mRNA"/>
</dbReference>
<dbReference type="EMBL" id="AK313031">
    <property type="protein sequence ID" value="BAG35864.1"/>
    <property type="molecule type" value="mRNA"/>
</dbReference>
<dbReference type="EMBL" id="CH471092">
    <property type="protein sequence ID" value="EAW82693.1"/>
    <property type="molecule type" value="Genomic_DNA"/>
</dbReference>
<dbReference type="EMBL" id="BC013044">
    <property type="protein sequence ID" value="AAH13044.1"/>
    <property type="molecule type" value="mRNA"/>
</dbReference>
<dbReference type="EMBL" id="BC015809">
    <property type="protein sequence ID" value="AAH15809.1"/>
    <property type="molecule type" value="mRNA"/>
</dbReference>
<dbReference type="CCDS" id="CCDS10726.1"/>
<dbReference type="RefSeq" id="NP_005871.1">
    <property type="nucleotide sequence ID" value="NM_005880.4"/>
</dbReference>
<dbReference type="PDB" id="7ZHS">
    <property type="method" value="EM"/>
    <property type="resolution" value="6.90 A"/>
    <property type="chains" value="A/B/C/D/E/F/G/H/I/J/K/L/M/N/O/P/Q/R/S/T/U/V/W/X/Y/Z/a/b/c/d=1-412"/>
</dbReference>
<dbReference type="PDBsum" id="7ZHS"/>
<dbReference type="EMDB" id="EMD-14706"/>
<dbReference type="EMDB" id="EMD-14727"/>
<dbReference type="EMDB" id="EMD-14729"/>
<dbReference type="EMDB" id="EMD-14736"/>
<dbReference type="SMR" id="O60884"/>
<dbReference type="BioGRID" id="115582">
    <property type="interactions" value="601"/>
</dbReference>
<dbReference type="CORUM" id="O60884"/>
<dbReference type="DIP" id="DIP-33143N"/>
<dbReference type="FunCoup" id="O60884">
    <property type="interactions" value="2216"/>
</dbReference>
<dbReference type="IntAct" id="O60884">
    <property type="interactions" value="274"/>
</dbReference>
<dbReference type="MINT" id="O60884"/>
<dbReference type="STRING" id="9606.ENSP00000314030"/>
<dbReference type="ChEMBL" id="CHEMBL4295671"/>
<dbReference type="GlyGen" id="O60884">
    <property type="glycosylation" value="1 site, 1 O-linked glycan (1 site)"/>
</dbReference>
<dbReference type="iPTMnet" id="O60884"/>
<dbReference type="MetOSite" id="O60884"/>
<dbReference type="PhosphoSitePlus" id="O60884"/>
<dbReference type="SwissPalm" id="O60884"/>
<dbReference type="BioMuta" id="DNAJA2"/>
<dbReference type="CPTAC" id="CPTAC-496"/>
<dbReference type="CPTAC" id="CPTAC-497"/>
<dbReference type="jPOST" id="O60884"/>
<dbReference type="MassIVE" id="O60884"/>
<dbReference type="PaxDb" id="9606-ENSP00000314030"/>
<dbReference type="PeptideAtlas" id="O60884"/>
<dbReference type="ProteomicsDB" id="49650"/>
<dbReference type="Pumba" id="O60884"/>
<dbReference type="Antibodypedia" id="28078">
    <property type="antibodies" value="413 antibodies from 31 providers"/>
</dbReference>
<dbReference type="DNASU" id="10294"/>
<dbReference type="Ensembl" id="ENST00000317089.10">
    <property type="protein sequence ID" value="ENSP00000314030.5"/>
    <property type="gene ID" value="ENSG00000069345.12"/>
</dbReference>
<dbReference type="GeneID" id="10294"/>
<dbReference type="KEGG" id="hsa:10294"/>
<dbReference type="MANE-Select" id="ENST00000317089.10">
    <property type="protein sequence ID" value="ENSP00000314030.5"/>
    <property type="RefSeq nucleotide sequence ID" value="NM_005880.4"/>
    <property type="RefSeq protein sequence ID" value="NP_005871.1"/>
</dbReference>
<dbReference type="UCSC" id="uc002eeo.3">
    <property type="organism name" value="human"/>
</dbReference>
<dbReference type="AGR" id="HGNC:14884"/>
<dbReference type="CTD" id="10294"/>
<dbReference type="DisGeNET" id="10294"/>
<dbReference type="GeneCards" id="DNAJA2"/>
<dbReference type="HGNC" id="HGNC:14884">
    <property type="gene designation" value="DNAJA2"/>
</dbReference>
<dbReference type="HPA" id="ENSG00000069345">
    <property type="expression patterns" value="Low tissue specificity"/>
</dbReference>
<dbReference type="MIM" id="611322">
    <property type="type" value="gene"/>
</dbReference>
<dbReference type="neXtProt" id="NX_O60884"/>
<dbReference type="OpenTargets" id="ENSG00000069345"/>
<dbReference type="PharmGKB" id="PA27409"/>
<dbReference type="VEuPathDB" id="HostDB:ENSG00000069345"/>
<dbReference type="eggNOG" id="KOG0712">
    <property type="taxonomic scope" value="Eukaryota"/>
</dbReference>
<dbReference type="GeneTree" id="ENSGT00940000154688"/>
<dbReference type="HOGENOM" id="CLU_017633_10_0_1"/>
<dbReference type="InParanoid" id="O60884"/>
<dbReference type="OMA" id="RVCPTCV"/>
<dbReference type="OrthoDB" id="550424at2759"/>
<dbReference type="PAN-GO" id="O60884">
    <property type="GO annotations" value="4 GO annotations based on evolutionary models"/>
</dbReference>
<dbReference type="PhylomeDB" id="O60884"/>
<dbReference type="TreeFam" id="TF105141"/>
<dbReference type="PathwayCommons" id="O60884"/>
<dbReference type="Reactome" id="R-HSA-3371497">
    <property type="pathway name" value="HSP90 chaperone cycle for steroid hormone receptors (SHR) in the presence of ligand"/>
</dbReference>
<dbReference type="SignaLink" id="O60884"/>
<dbReference type="BioGRID-ORCS" id="10294">
    <property type="hits" value="31 hits in 1157 CRISPR screens"/>
</dbReference>
<dbReference type="CD-CODE" id="FB4E32DD">
    <property type="entry name" value="Presynaptic clusters and postsynaptic densities"/>
</dbReference>
<dbReference type="ChiTaRS" id="DNAJA2">
    <property type="organism name" value="human"/>
</dbReference>
<dbReference type="GeneWiki" id="DNAJA2"/>
<dbReference type="GenomeRNAi" id="10294"/>
<dbReference type="Pharos" id="O60884">
    <property type="development level" value="Tbio"/>
</dbReference>
<dbReference type="PRO" id="PR:O60884"/>
<dbReference type="Proteomes" id="UP000005640">
    <property type="component" value="Chromosome 16"/>
</dbReference>
<dbReference type="RNAct" id="O60884">
    <property type="molecule type" value="protein"/>
</dbReference>
<dbReference type="Bgee" id="ENSG00000069345">
    <property type="expression patterns" value="Expressed in calcaneal tendon and 208 other cell types or tissues"/>
</dbReference>
<dbReference type="ExpressionAtlas" id="O60884">
    <property type="expression patterns" value="baseline and differential"/>
</dbReference>
<dbReference type="GO" id="GO:0005737">
    <property type="term" value="C:cytoplasm"/>
    <property type="evidence" value="ECO:0000318"/>
    <property type="project" value="GO_Central"/>
</dbReference>
<dbReference type="GO" id="GO:0005829">
    <property type="term" value="C:cytosol"/>
    <property type="evidence" value="ECO:0000314"/>
    <property type="project" value="UniProtKB"/>
</dbReference>
<dbReference type="GO" id="GO:0070062">
    <property type="term" value="C:extracellular exosome"/>
    <property type="evidence" value="ECO:0007005"/>
    <property type="project" value="UniProtKB"/>
</dbReference>
<dbReference type="GO" id="GO:0016020">
    <property type="term" value="C:membrane"/>
    <property type="evidence" value="ECO:0007669"/>
    <property type="project" value="UniProtKB-SubCell"/>
</dbReference>
<dbReference type="GO" id="GO:0005524">
    <property type="term" value="F:ATP binding"/>
    <property type="evidence" value="ECO:0007669"/>
    <property type="project" value="InterPro"/>
</dbReference>
<dbReference type="GO" id="GO:0001671">
    <property type="term" value="F:ATPase activator activity"/>
    <property type="evidence" value="ECO:0000314"/>
    <property type="project" value="UniProtKB"/>
</dbReference>
<dbReference type="GO" id="GO:0030544">
    <property type="term" value="F:Hsp70 protein binding"/>
    <property type="evidence" value="ECO:0007669"/>
    <property type="project" value="InterPro"/>
</dbReference>
<dbReference type="GO" id="GO:0051087">
    <property type="term" value="F:protein-folding chaperone binding"/>
    <property type="evidence" value="ECO:0000353"/>
    <property type="project" value="UniProtKB"/>
</dbReference>
<dbReference type="GO" id="GO:0051082">
    <property type="term" value="F:unfolded protein binding"/>
    <property type="evidence" value="ECO:0000314"/>
    <property type="project" value="UniProtKB"/>
</dbReference>
<dbReference type="GO" id="GO:0008270">
    <property type="term" value="F:zinc ion binding"/>
    <property type="evidence" value="ECO:0007669"/>
    <property type="project" value="UniProtKB-KW"/>
</dbReference>
<dbReference type="GO" id="GO:0008284">
    <property type="term" value="P:positive regulation of cell population proliferation"/>
    <property type="evidence" value="ECO:0000304"/>
    <property type="project" value="ProtInc"/>
</dbReference>
<dbReference type="GO" id="GO:0042026">
    <property type="term" value="P:protein refolding"/>
    <property type="evidence" value="ECO:0000314"/>
    <property type="project" value="UniProtKB"/>
</dbReference>
<dbReference type="GO" id="GO:0009408">
    <property type="term" value="P:response to heat"/>
    <property type="evidence" value="ECO:0007669"/>
    <property type="project" value="InterPro"/>
</dbReference>
<dbReference type="CDD" id="cd06257">
    <property type="entry name" value="DnaJ"/>
    <property type="match status" value="1"/>
</dbReference>
<dbReference type="CDD" id="cd10747">
    <property type="entry name" value="DnaJ_C"/>
    <property type="match status" value="1"/>
</dbReference>
<dbReference type="CDD" id="cd10719">
    <property type="entry name" value="DnaJ_zf"/>
    <property type="match status" value="1"/>
</dbReference>
<dbReference type="FunFam" id="2.60.260.20:FF:000068">
    <property type="entry name" value="Chaperone protein dnaJ 3"/>
    <property type="match status" value="1"/>
</dbReference>
<dbReference type="FunFam" id="1.10.287.110:FF:000016">
    <property type="entry name" value="DnaJ (Hsp40) homolog, subfamily A, member 2"/>
    <property type="match status" value="1"/>
</dbReference>
<dbReference type="FunFam" id="2.10.230.10:FF:000005">
    <property type="entry name" value="DnaJ homolog subfamily A member 1"/>
    <property type="match status" value="1"/>
</dbReference>
<dbReference type="FunFam" id="2.60.260.20:FF:000003">
    <property type="entry name" value="DnaJ subfamily A member 2"/>
    <property type="match status" value="1"/>
</dbReference>
<dbReference type="Gene3D" id="1.10.287.110">
    <property type="entry name" value="DnaJ domain"/>
    <property type="match status" value="1"/>
</dbReference>
<dbReference type="Gene3D" id="2.10.230.10">
    <property type="entry name" value="Heat shock protein DnaJ, cysteine-rich domain"/>
    <property type="match status" value="1"/>
</dbReference>
<dbReference type="Gene3D" id="2.60.260.20">
    <property type="entry name" value="Urease metallochaperone UreE, N-terminal domain"/>
    <property type="match status" value="2"/>
</dbReference>
<dbReference type="HAMAP" id="MF_01152">
    <property type="entry name" value="DnaJ"/>
    <property type="match status" value="1"/>
</dbReference>
<dbReference type="InterPro" id="IPR012724">
    <property type="entry name" value="DnaJ"/>
</dbReference>
<dbReference type="InterPro" id="IPR002939">
    <property type="entry name" value="DnaJ_C"/>
</dbReference>
<dbReference type="InterPro" id="IPR001623">
    <property type="entry name" value="DnaJ_domain"/>
</dbReference>
<dbReference type="InterPro" id="IPR018253">
    <property type="entry name" value="DnaJ_domain_CS"/>
</dbReference>
<dbReference type="InterPro" id="IPR044713">
    <property type="entry name" value="DNJA1/2-like"/>
</dbReference>
<dbReference type="InterPro" id="IPR008971">
    <property type="entry name" value="HSP40/DnaJ_pept-bd"/>
</dbReference>
<dbReference type="InterPro" id="IPR001305">
    <property type="entry name" value="HSP_DnaJ_Cys-rich_dom"/>
</dbReference>
<dbReference type="InterPro" id="IPR036410">
    <property type="entry name" value="HSP_DnaJ_Cys-rich_dom_sf"/>
</dbReference>
<dbReference type="InterPro" id="IPR036869">
    <property type="entry name" value="J_dom_sf"/>
</dbReference>
<dbReference type="PANTHER" id="PTHR43888">
    <property type="entry name" value="DNAJ-LIKE-2, ISOFORM A-RELATED"/>
    <property type="match status" value="1"/>
</dbReference>
<dbReference type="Pfam" id="PF00226">
    <property type="entry name" value="DnaJ"/>
    <property type="match status" value="1"/>
</dbReference>
<dbReference type="Pfam" id="PF01556">
    <property type="entry name" value="DnaJ_C"/>
    <property type="match status" value="1"/>
</dbReference>
<dbReference type="Pfam" id="PF00684">
    <property type="entry name" value="DnaJ_CXXCXGXG"/>
    <property type="match status" value="1"/>
</dbReference>
<dbReference type="PRINTS" id="PR00625">
    <property type="entry name" value="JDOMAIN"/>
</dbReference>
<dbReference type="SMART" id="SM00271">
    <property type="entry name" value="DnaJ"/>
    <property type="match status" value="1"/>
</dbReference>
<dbReference type="SUPFAM" id="SSF46565">
    <property type="entry name" value="Chaperone J-domain"/>
    <property type="match status" value="1"/>
</dbReference>
<dbReference type="SUPFAM" id="SSF57938">
    <property type="entry name" value="DnaJ/Hsp40 cysteine-rich domain"/>
    <property type="match status" value="1"/>
</dbReference>
<dbReference type="SUPFAM" id="SSF49493">
    <property type="entry name" value="HSP40/DnaJ peptide-binding domain"/>
    <property type="match status" value="2"/>
</dbReference>
<dbReference type="PROSITE" id="PS00636">
    <property type="entry name" value="DNAJ_1"/>
    <property type="match status" value="1"/>
</dbReference>
<dbReference type="PROSITE" id="PS50076">
    <property type="entry name" value="DNAJ_2"/>
    <property type="match status" value="1"/>
</dbReference>
<dbReference type="PROSITE" id="PS51188">
    <property type="entry name" value="ZF_CR"/>
    <property type="match status" value="1"/>
</dbReference>
<accession>O60884</accession>
<accession>B2R7L7</accession>
<accession>O14711</accession>
<feature type="chain" id="PRO_0000071011" description="DnaJ homolog subfamily A member 2">
    <location>
        <begin position="1"/>
        <end position="409"/>
    </location>
</feature>
<feature type="propeptide" id="PRO_0000393942" description="Removed in mature form" evidence="7">
    <location>
        <begin position="410"/>
        <end position="412"/>
    </location>
</feature>
<feature type="domain" description="J">
    <location>
        <begin position="8"/>
        <end position="70"/>
    </location>
</feature>
<feature type="repeat" description="CXXCXGXG motif">
    <location>
        <begin position="143"/>
        <end position="150"/>
    </location>
</feature>
<feature type="repeat" description="CXXCXGXG motif">
    <location>
        <begin position="159"/>
        <end position="166"/>
    </location>
</feature>
<feature type="repeat" description="CXXCXGXG motif">
    <location>
        <begin position="186"/>
        <end position="193"/>
    </location>
</feature>
<feature type="repeat" description="CXXCXGXG motif">
    <location>
        <begin position="202"/>
        <end position="209"/>
    </location>
</feature>
<feature type="zinc finger region" description="CR-type">
    <location>
        <begin position="130"/>
        <end position="214"/>
    </location>
</feature>
<feature type="region of interest" description="Disordered" evidence="4">
    <location>
        <begin position="365"/>
        <end position="412"/>
    </location>
</feature>
<feature type="binding site" evidence="1">
    <location>
        <position position="143"/>
    </location>
    <ligand>
        <name>Zn(2+)</name>
        <dbReference type="ChEBI" id="CHEBI:29105"/>
        <label>1</label>
    </ligand>
</feature>
<feature type="binding site" evidence="1">
    <location>
        <position position="146"/>
    </location>
    <ligand>
        <name>Zn(2+)</name>
        <dbReference type="ChEBI" id="CHEBI:29105"/>
        <label>1</label>
    </ligand>
</feature>
<feature type="binding site" evidence="1">
    <location>
        <position position="159"/>
    </location>
    <ligand>
        <name>Zn(2+)</name>
        <dbReference type="ChEBI" id="CHEBI:29105"/>
        <label>2</label>
    </ligand>
</feature>
<feature type="binding site" evidence="1">
    <location>
        <position position="162"/>
    </location>
    <ligand>
        <name>Zn(2+)</name>
        <dbReference type="ChEBI" id="CHEBI:29105"/>
        <label>2</label>
    </ligand>
</feature>
<feature type="binding site" evidence="1">
    <location>
        <position position="186"/>
    </location>
    <ligand>
        <name>Zn(2+)</name>
        <dbReference type="ChEBI" id="CHEBI:29105"/>
        <label>2</label>
    </ligand>
</feature>
<feature type="binding site" evidence="1">
    <location>
        <position position="189"/>
    </location>
    <ligand>
        <name>Zn(2+)</name>
        <dbReference type="ChEBI" id="CHEBI:29105"/>
        <label>2</label>
    </ligand>
</feature>
<feature type="binding site" evidence="1">
    <location>
        <position position="202"/>
    </location>
    <ligand>
        <name>Zn(2+)</name>
        <dbReference type="ChEBI" id="CHEBI:29105"/>
        <label>1</label>
    </ligand>
</feature>
<feature type="binding site" evidence="1">
    <location>
        <position position="205"/>
    </location>
    <ligand>
        <name>Zn(2+)</name>
        <dbReference type="ChEBI" id="CHEBI:29105"/>
        <label>1</label>
    </ligand>
</feature>
<feature type="modified residue" description="N6-acetyllysine" evidence="3">
    <location>
        <position position="39"/>
    </location>
</feature>
<feature type="modified residue" description="Phosphoserine" evidence="8 9 10">
    <location>
        <position position="78"/>
    </location>
</feature>
<feature type="modified residue" description="Phosphoserine" evidence="2">
    <location>
        <position position="123"/>
    </location>
</feature>
<feature type="modified residue" description="N6-acetyllysine" evidence="3">
    <location>
        <position position="152"/>
    </location>
</feature>
<feature type="modified residue" description="Phosphotyrosine" evidence="11">
    <location>
        <position position="391"/>
    </location>
</feature>
<feature type="modified residue" description="Phosphoserine" evidence="11">
    <location>
        <position position="394"/>
    </location>
</feature>
<feature type="modified residue" description="Phosphoserine" evidence="11">
    <location>
        <position position="395"/>
    </location>
</feature>
<feature type="modified residue" description="Cysteine methyl ester" evidence="7">
    <location>
        <position position="409"/>
    </location>
</feature>
<feature type="lipid moiety-binding region" description="S-farnesyl cysteine" evidence="5">
    <location>
        <position position="409"/>
    </location>
</feature>
<feature type="cross-link" description="Glycyl lysine isopeptide (Lys-Gly) (interchain with G-Cter in SUMO2)" evidence="12">
    <location>
        <position position="134"/>
    </location>
</feature>
<feature type="sequence conflict" description="In Ref. 2; AAB69313." evidence="7" ref="2">
    <original>P</original>
    <variation>A</variation>
    <location>
        <position position="17"/>
    </location>
</feature>
<feature type="sequence conflict" description="In Ref. 2; AAB69313." evidence="7" ref="2">
    <original>NAGDK</original>
    <variation>QMQETN</variation>
    <location>
        <begin position="42"/>
        <end position="46"/>
    </location>
</feature>
<feature type="sequence conflict" description="In Ref. 2; AAB69313." evidence="7" ref="2">
    <original>GMDDIFSHIFG</original>
    <variation>WHGLIFSLTVFC</variation>
    <location>
        <begin position="83"/>
        <end position="93"/>
    </location>
</feature>
<feature type="sequence conflict" description="In Ref. 2; AAB69313." evidence="7" ref="2">
    <original>GVEPGDIVLLLQEKEH</original>
    <variation>EWNPETLFFLLPGEKNM</variation>
    <location>
        <begin position="242"/>
        <end position="257"/>
    </location>
</feature>
<feature type="sequence conflict" description="In Ref. 2; AAB69313." evidence="7" ref="2">
    <original>FK</original>
    <variation>LS</variation>
    <location>
        <begin position="286"/>
        <end position="287"/>
    </location>
</feature>
<feature type="sequence conflict" description="In Ref. 2; AAB69313." evidence="7" ref="2">
    <original>D</original>
    <variation>G</variation>
    <location>
        <position position="328"/>
    </location>
</feature>
<comment type="function">
    <text evidence="6">Co-chaperone of Hsc70. Stimulates ATP hydrolysis and the folding of unfolded proteins mediated by HSPA1A/B (in vitro) (PubMed:24318877).</text>
</comment>
<comment type="interaction">
    <interactant intactId="EBI-352957">
        <id>O60884</id>
    </interactant>
    <interactant intactId="EBI-3834328">
        <id>Q9GZX7</id>
        <label>AICDA</label>
    </interactant>
    <organismsDiffer>false</organismsDiffer>
    <experiments>3</experiments>
</comment>
<comment type="interaction">
    <interactant intactId="EBI-352957">
        <id>O60884</id>
    </interactant>
    <interactant intactId="EBI-2555157">
        <id>Q8WW22</id>
        <label>DNAJA4</label>
    </interactant>
    <organismsDiffer>false</organismsDiffer>
    <experiments>3</experiments>
</comment>
<comment type="interaction">
    <interactant intactId="EBI-352957">
        <id>O60884</id>
    </interactant>
    <interactant intactId="EBI-1176455">
        <id>P63172</id>
        <label>DYNLT1</label>
    </interactant>
    <organismsDiffer>false</organismsDiffer>
    <experiments>3</experiments>
</comment>
<comment type="interaction">
    <interactant intactId="EBI-352957">
        <id>O60884</id>
    </interactant>
    <interactant intactId="EBI-357298">
        <id>Q9Y266</id>
        <label>NUDC</label>
    </interactant>
    <organismsDiffer>false</organismsDiffer>
    <experiments>4</experiments>
</comment>
<comment type="subcellular location">
    <subcellularLocation>
        <location evidence="7">Membrane</location>
        <topology evidence="7">Lipid-anchor</topology>
    </subcellularLocation>
</comment>
<gene>
    <name type="primary">DNAJA2</name>
    <name type="synonym">CPR3</name>
    <name type="synonym">HIRIP4</name>
</gene>
<evidence type="ECO:0000250" key="1"/>
<evidence type="ECO:0000250" key="2">
    <source>
        <dbReference type="UniProtKB" id="O35824"/>
    </source>
</evidence>
<evidence type="ECO:0000250" key="3">
    <source>
        <dbReference type="UniProtKB" id="Q9QYJ0"/>
    </source>
</evidence>
<evidence type="ECO:0000256" key="4">
    <source>
        <dbReference type="SAM" id="MobiDB-lite"/>
    </source>
</evidence>
<evidence type="ECO:0000269" key="5">
    <source>
    </source>
</evidence>
<evidence type="ECO:0000269" key="6">
    <source>
    </source>
</evidence>
<evidence type="ECO:0000305" key="7"/>
<evidence type="ECO:0007744" key="8">
    <source>
    </source>
</evidence>
<evidence type="ECO:0007744" key="9">
    <source>
    </source>
</evidence>
<evidence type="ECO:0007744" key="10">
    <source>
    </source>
</evidence>
<evidence type="ECO:0007744" key="11">
    <source>
    </source>
</evidence>
<evidence type="ECO:0007744" key="12">
    <source>
    </source>
</evidence>
<keyword id="KW-0002">3D-structure</keyword>
<keyword id="KW-0007">Acetylation</keyword>
<keyword id="KW-0143">Chaperone</keyword>
<keyword id="KW-1017">Isopeptide bond</keyword>
<keyword id="KW-0449">Lipoprotein</keyword>
<keyword id="KW-0472">Membrane</keyword>
<keyword id="KW-0479">Metal-binding</keyword>
<keyword id="KW-0488">Methylation</keyword>
<keyword id="KW-0597">Phosphoprotein</keyword>
<keyword id="KW-0636">Prenylation</keyword>
<keyword id="KW-1267">Proteomics identification</keyword>
<keyword id="KW-1185">Reference proteome</keyword>
<keyword id="KW-0677">Repeat</keyword>
<keyword id="KW-0832">Ubl conjugation</keyword>
<keyword id="KW-0862">Zinc</keyword>
<keyword id="KW-0863">Zinc-finger</keyword>
<sequence>MANVADTKLYDILGVPPGASENELKKAYRKLAKEYHPDKNPNAGDKFKEISFAYEVLSNPEKRELYDRYGEQGLREGSGGGGGMDDIFSHIFGGGLFGFMGNQSRSRNGRRRGEDMMHPLKVSLEDLYNGKTTKLQLSKNVLCSACSGQGGKSGAVQKCSACRGRGVRIMIRQLAPGMVQQMQSVCSDCNGEGEVINEKDRCKKCEGKKVIKEVKILEVHVDKGMKHGQRITFTGEADQAPGVEPGDIVLLLQEKEHEVFQRDGNDLHMTYKIGLVEALCGFQFTFKHLDGRQIVVKYPPGKVIEPGCVRVVRGEGMPQYRNPFEKGDLYIKFDVQFPENNWINPDKLSELEDLLPSRPEVPNIIGETEEVELQEFDSTRGSGGGQRREAYNDSSDEESSSHHGPGVQCAHQ</sequence>
<reference key="1">
    <citation type="submission" date="1997-08" db="EMBL/GenBank/DDBJ databases">
        <title>HIRIP4, a new human DnaJ, is a nuclear protein that interacts with the product of the DiGeorge syndrome gene candidate HIRA.</title>
        <authorList>
            <person name="Lorain S."/>
            <person name="Brendel C."/>
            <person name="Scamps C."/>
            <person name="Lecluse Y."/>
            <person name="Lipinski M."/>
        </authorList>
    </citation>
    <scope>NUCLEOTIDE SEQUENCE [MRNA]</scope>
</reference>
<reference key="2">
    <citation type="journal article" date="1997" name="Genetics">
        <title>Human CPR (cell cycle progression restoration) genes impart a Far-phenotype on yeast cells.</title>
        <authorList>
            <person name="Edwards M.C."/>
            <person name="Liegeois N."/>
            <person name="Horecka J."/>
            <person name="DePinho R.A."/>
            <person name="Sprague G.F. Jr."/>
            <person name="Tyers M."/>
            <person name="Elledge S.J."/>
        </authorList>
    </citation>
    <scope>NUCLEOTIDE SEQUENCE [MRNA]</scope>
</reference>
<reference key="3">
    <citation type="journal article" date="2004" name="Nat. Genet.">
        <title>Complete sequencing and characterization of 21,243 full-length human cDNAs.</title>
        <authorList>
            <person name="Ota T."/>
            <person name="Suzuki Y."/>
            <person name="Nishikawa T."/>
            <person name="Otsuki T."/>
            <person name="Sugiyama T."/>
            <person name="Irie R."/>
            <person name="Wakamatsu A."/>
            <person name="Hayashi K."/>
            <person name="Sato H."/>
            <person name="Nagai K."/>
            <person name="Kimura K."/>
            <person name="Makita H."/>
            <person name="Sekine M."/>
            <person name="Obayashi M."/>
            <person name="Nishi T."/>
            <person name="Shibahara T."/>
            <person name="Tanaka T."/>
            <person name="Ishii S."/>
            <person name="Yamamoto J."/>
            <person name="Saito K."/>
            <person name="Kawai Y."/>
            <person name="Isono Y."/>
            <person name="Nakamura Y."/>
            <person name="Nagahari K."/>
            <person name="Murakami K."/>
            <person name="Yasuda T."/>
            <person name="Iwayanagi T."/>
            <person name="Wagatsuma M."/>
            <person name="Shiratori A."/>
            <person name="Sudo H."/>
            <person name="Hosoiri T."/>
            <person name="Kaku Y."/>
            <person name="Kodaira H."/>
            <person name="Kondo H."/>
            <person name="Sugawara M."/>
            <person name="Takahashi M."/>
            <person name="Kanda K."/>
            <person name="Yokoi T."/>
            <person name="Furuya T."/>
            <person name="Kikkawa E."/>
            <person name="Omura Y."/>
            <person name="Abe K."/>
            <person name="Kamihara K."/>
            <person name="Katsuta N."/>
            <person name="Sato K."/>
            <person name="Tanikawa M."/>
            <person name="Yamazaki M."/>
            <person name="Ninomiya K."/>
            <person name="Ishibashi T."/>
            <person name="Yamashita H."/>
            <person name="Murakawa K."/>
            <person name="Fujimori K."/>
            <person name="Tanai H."/>
            <person name="Kimata M."/>
            <person name="Watanabe M."/>
            <person name="Hiraoka S."/>
            <person name="Chiba Y."/>
            <person name="Ishida S."/>
            <person name="Ono Y."/>
            <person name="Takiguchi S."/>
            <person name="Watanabe S."/>
            <person name="Yosida M."/>
            <person name="Hotuta T."/>
            <person name="Kusano J."/>
            <person name="Kanehori K."/>
            <person name="Takahashi-Fujii A."/>
            <person name="Hara H."/>
            <person name="Tanase T.-O."/>
            <person name="Nomura Y."/>
            <person name="Togiya S."/>
            <person name="Komai F."/>
            <person name="Hara R."/>
            <person name="Takeuchi K."/>
            <person name="Arita M."/>
            <person name="Imose N."/>
            <person name="Musashino K."/>
            <person name="Yuuki H."/>
            <person name="Oshima A."/>
            <person name="Sasaki N."/>
            <person name="Aotsuka S."/>
            <person name="Yoshikawa Y."/>
            <person name="Matsunawa H."/>
            <person name="Ichihara T."/>
            <person name="Shiohata N."/>
            <person name="Sano S."/>
            <person name="Moriya S."/>
            <person name="Momiyama H."/>
            <person name="Satoh N."/>
            <person name="Takami S."/>
            <person name="Terashima Y."/>
            <person name="Suzuki O."/>
            <person name="Nakagawa S."/>
            <person name="Senoh A."/>
            <person name="Mizoguchi H."/>
            <person name="Goto Y."/>
            <person name="Shimizu F."/>
            <person name="Wakebe H."/>
            <person name="Hishigaki H."/>
            <person name="Watanabe T."/>
            <person name="Sugiyama A."/>
            <person name="Takemoto M."/>
            <person name="Kawakami B."/>
            <person name="Yamazaki M."/>
            <person name="Watanabe K."/>
            <person name="Kumagai A."/>
            <person name="Itakura S."/>
            <person name="Fukuzumi Y."/>
            <person name="Fujimori Y."/>
            <person name="Komiyama M."/>
            <person name="Tashiro H."/>
            <person name="Tanigami A."/>
            <person name="Fujiwara T."/>
            <person name="Ono T."/>
            <person name="Yamada K."/>
            <person name="Fujii Y."/>
            <person name="Ozaki K."/>
            <person name="Hirao M."/>
            <person name="Ohmori Y."/>
            <person name="Kawabata A."/>
            <person name="Hikiji T."/>
            <person name="Kobatake N."/>
            <person name="Inagaki H."/>
            <person name="Ikema Y."/>
            <person name="Okamoto S."/>
            <person name="Okitani R."/>
            <person name="Kawakami T."/>
            <person name="Noguchi S."/>
            <person name="Itoh T."/>
            <person name="Shigeta K."/>
            <person name="Senba T."/>
            <person name="Matsumura K."/>
            <person name="Nakajima Y."/>
            <person name="Mizuno T."/>
            <person name="Morinaga M."/>
            <person name="Sasaki M."/>
            <person name="Togashi T."/>
            <person name="Oyama M."/>
            <person name="Hata H."/>
            <person name="Watanabe M."/>
            <person name="Komatsu T."/>
            <person name="Mizushima-Sugano J."/>
            <person name="Satoh T."/>
            <person name="Shirai Y."/>
            <person name="Takahashi Y."/>
            <person name="Nakagawa K."/>
            <person name="Okumura K."/>
            <person name="Nagase T."/>
            <person name="Nomura N."/>
            <person name="Kikuchi H."/>
            <person name="Masuho Y."/>
            <person name="Yamashita R."/>
            <person name="Nakai K."/>
            <person name="Yada T."/>
            <person name="Nakamura Y."/>
            <person name="Ohara O."/>
            <person name="Isogai T."/>
            <person name="Sugano S."/>
        </authorList>
    </citation>
    <scope>NUCLEOTIDE SEQUENCE [LARGE SCALE MRNA]</scope>
    <source>
        <tissue>Amygdala</tissue>
    </source>
</reference>
<reference key="4">
    <citation type="submission" date="2005-07" db="EMBL/GenBank/DDBJ databases">
        <authorList>
            <person name="Mural R.J."/>
            <person name="Istrail S."/>
            <person name="Sutton G.G."/>
            <person name="Florea L."/>
            <person name="Halpern A.L."/>
            <person name="Mobarry C.M."/>
            <person name="Lippert R."/>
            <person name="Walenz B."/>
            <person name="Shatkay H."/>
            <person name="Dew I."/>
            <person name="Miller J.R."/>
            <person name="Flanigan M.J."/>
            <person name="Edwards N.J."/>
            <person name="Bolanos R."/>
            <person name="Fasulo D."/>
            <person name="Halldorsson B.V."/>
            <person name="Hannenhalli S."/>
            <person name="Turner R."/>
            <person name="Yooseph S."/>
            <person name="Lu F."/>
            <person name="Nusskern D.R."/>
            <person name="Shue B.C."/>
            <person name="Zheng X.H."/>
            <person name="Zhong F."/>
            <person name="Delcher A.L."/>
            <person name="Huson D.H."/>
            <person name="Kravitz S.A."/>
            <person name="Mouchard L."/>
            <person name="Reinert K."/>
            <person name="Remington K.A."/>
            <person name="Clark A.G."/>
            <person name="Waterman M.S."/>
            <person name="Eichler E.E."/>
            <person name="Adams M.D."/>
            <person name="Hunkapiller M.W."/>
            <person name="Myers E.W."/>
            <person name="Venter J.C."/>
        </authorList>
    </citation>
    <scope>NUCLEOTIDE SEQUENCE [LARGE SCALE GENOMIC DNA]</scope>
</reference>
<reference key="5">
    <citation type="journal article" date="2004" name="Genome Res.">
        <title>The status, quality, and expansion of the NIH full-length cDNA project: the Mammalian Gene Collection (MGC).</title>
        <authorList>
            <consortium name="The MGC Project Team"/>
        </authorList>
    </citation>
    <scope>NUCLEOTIDE SEQUENCE [LARGE SCALE MRNA]</scope>
    <source>
        <tissue>Placenta</tissue>
        <tissue>Skin</tissue>
    </source>
</reference>
<reference key="6">
    <citation type="journal article" date="1999" name="Int. J. Cancer">
        <title>Antigens recognized by autologous antibody in patients with renal-cell carcinoma.</title>
        <authorList>
            <person name="Scanlan M.J."/>
            <person name="Gordan J.D."/>
            <person name="Williamson B."/>
            <person name="Stockert E."/>
            <person name="Bander N.H."/>
            <person name="Jongeneel C.V."/>
            <person name="Gure A.O."/>
            <person name="Jaeger D."/>
            <person name="Jaeger E."/>
            <person name="Knuth A."/>
            <person name="Chen Y.-T."/>
            <person name="Old L.J."/>
        </authorList>
    </citation>
    <scope>IDENTIFICATION AS A RENAL CANCER ANTIGEN</scope>
    <source>
        <tissue>Renal cell carcinoma</tissue>
    </source>
</reference>
<reference key="7">
    <citation type="journal article" date="2000" name="J. Biol. Chem.">
        <title>Human DnaJ homologs dj2 and dj3, and bag-1 are positive cochaperones of hsc70.</title>
        <authorList>
            <person name="Terada K."/>
            <person name="Mori M."/>
        </authorList>
    </citation>
    <scope>CHARACTERIZATION</scope>
</reference>
<reference key="8">
    <citation type="journal article" date="2004" name="Proc. Natl. Acad. Sci. U.S.A.">
        <title>A tagging-via-substrate technology for detection and proteomics of farnesylated proteins.</title>
        <authorList>
            <person name="Kho Y."/>
            <person name="Kim S.C."/>
            <person name="Jiang C."/>
            <person name="Barma D."/>
            <person name="Kwon S.W."/>
            <person name="Cheng J."/>
            <person name="Jaunbergs J."/>
            <person name="Weinbaum C."/>
            <person name="Tamanoi F."/>
            <person name="Falck J."/>
            <person name="Zhao Y."/>
        </authorList>
    </citation>
    <scope>ISOPRENYLATION AT CYS-409</scope>
</reference>
<reference key="9">
    <citation type="journal article" date="2006" name="Cell">
        <title>Global, in vivo, and site-specific phosphorylation dynamics in signaling networks.</title>
        <authorList>
            <person name="Olsen J.V."/>
            <person name="Blagoev B."/>
            <person name="Gnad F."/>
            <person name="Macek B."/>
            <person name="Kumar C."/>
            <person name="Mortensen P."/>
            <person name="Mann M."/>
        </authorList>
    </citation>
    <scope>PHOSPHORYLATION [LARGE SCALE ANALYSIS] AT SER-78</scope>
    <scope>IDENTIFICATION BY MASS SPECTROMETRY [LARGE SCALE ANALYSIS]</scope>
    <source>
        <tissue>Cervix carcinoma</tissue>
    </source>
</reference>
<reference key="10">
    <citation type="journal article" date="2009" name="Sci. Signal.">
        <title>Quantitative phosphoproteomic analysis of T cell receptor signaling reveals system-wide modulation of protein-protein interactions.</title>
        <authorList>
            <person name="Mayya V."/>
            <person name="Lundgren D.H."/>
            <person name="Hwang S.-I."/>
            <person name="Rezaul K."/>
            <person name="Wu L."/>
            <person name="Eng J.K."/>
            <person name="Rodionov V."/>
            <person name="Han D.K."/>
        </authorList>
    </citation>
    <scope>PHOSPHORYLATION [LARGE SCALE ANALYSIS] AT SER-78</scope>
    <scope>IDENTIFICATION BY MASS SPECTROMETRY [LARGE SCALE ANALYSIS]</scope>
    <source>
        <tissue>Leukemic T-cell</tissue>
    </source>
</reference>
<reference key="11">
    <citation type="journal article" date="2010" name="Sci. Signal.">
        <title>Quantitative phosphoproteomics reveals widespread full phosphorylation site occupancy during mitosis.</title>
        <authorList>
            <person name="Olsen J.V."/>
            <person name="Vermeulen M."/>
            <person name="Santamaria A."/>
            <person name="Kumar C."/>
            <person name="Miller M.L."/>
            <person name="Jensen L.J."/>
            <person name="Gnad F."/>
            <person name="Cox J."/>
            <person name="Jensen T.S."/>
            <person name="Nigg E.A."/>
            <person name="Brunak S."/>
            <person name="Mann M."/>
        </authorList>
    </citation>
    <scope>PHOSPHORYLATION [LARGE SCALE ANALYSIS] AT SER-78</scope>
    <scope>IDENTIFICATION BY MASS SPECTROMETRY [LARGE SCALE ANALYSIS]</scope>
    <source>
        <tissue>Cervix carcinoma</tissue>
    </source>
</reference>
<reference key="12">
    <citation type="journal article" date="2011" name="BMC Syst. Biol.">
        <title>Initial characterization of the human central proteome.</title>
        <authorList>
            <person name="Burkard T.R."/>
            <person name="Planyavsky M."/>
            <person name="Kaupe I."/>
            <person name="Breitwieser F.P."/>
            <person name="Buerckstuemmer T."/>
            <person name="Bennett K.L."/>
            <person name="Superti-Furga G."/>
            <person name="Colinge J."/>
        </authorList>
    </citation>
    <scope>IDENTIFICATION BY MASS SPECTROMETRY [LARGE SCALE ANALYSIS]</scope>
</reference>
<reference key="13">
    <citation type="journal article" date="2014" name="J. Biol. Chem.">
        <title>Binding of human nucleotide exchange factors to heat shock protein 70 (Hsp70) generates functionally distinct complexes in vitro.</title>
        <authorList>
            <person name="Rauch J.N."/>
            <person name="Gestwicki J.E."/>
        </authorList>
    </citation>
    <scope>FUNCTION</scope>
</reference>
<reference key="14">
    <citation type="journal article" date="2014" name="J. Proteomics">
        <title>An enzyme assisted RP-RPLC approach for in-depth analysis of human liver phosphoproteome.</title>
        <authorList>
            <person name="Bian Y."/>
            <person name="Song C."/>
            <person name="Cheng K."/>
            <person name="Dong M."/>
            <person name="Wang F."/>
            <person name="Huang J."/>
            <person name="Sun D."/>
            <person name="Wang L."/>
            <person name="Ye M."/>
            <person name="Zou H."/>
        </authorList>
    </citation>
    <scope>PHOSPHORYLATION [LARGE SCALE ANALYSIS] AT TYR-391; SER-394 AND SER-395</scope>
    <scope>IDENTIFICATION BY MASS SPECTROMETRY [LARGE SCALE ANALYSIS]</scope>
    <source>
        <tissue>Liver</tissue>
    </source>
</reference>
<reference key="15">
    <citation type="journal article" date="2015" name="Proteomics">
        <title>N-terminome analysis of the human mitochondrial proteome.</title>
        <authorList>
            <person name="Vaca Jacome A.S."/>
            <person name="Rabilloud T."/>
            <person name="Schaeffer-Reiss C."/>
            <person name="Rompais M."/>
            <person name="Ayoub D."/>
            <person name="Lane L."/>
            <person name="Bairoch A."/>
            <person name="Van Dorsselaer A."/>
            <person name="Carapito C."/>
        </authorList>
    </citation>
    <scope>IDENTIFICATION BY MASS SPECTROMETRY [LARGE SCALE ANALYSIS]</scope>
</reference>
<reference key="16">
    <citation type="journal article" date="2017" name="Nat. Struct. Mol. Biol.">
        <title>Site-specific mapping of the human SUMO proteome reveals co-modification with phosphorylation.</title>
        <authorList>
            <person name="Hendriks I.A."/>
            <person name="Lyon D."/>
            <person name="Young C."/>
            <person name="Jensen L.J."/>
            <person name="Vertegaal A.C."/>
            <person name="Nielsen M.L."/>
        </authorList>
    </citation>
    <scope>SUMOYLATION [LARGE SCALE ANALYSIS] AT LYS-134</scope>
    <scope>IDENTIFICATION BY MASS SPECTROMETRY [LARGE SCALE ANALYSIS]</scope>
</reference>
<protein>
    <recommendedName>
        <fullName>DnaJ homolog subfamily A member 2</fullName>
    </recommendedName>
    <alternativeName>
        <fullName>Cell cycle progression restoration gene 3 protein</fullName>
    </alternativeName>
    <alternativeName>
        <fullName>Dnj3</fullName>
        <shortName>Dj3</shortName>
    </alternativeName>
    <alternativeName>
        <fullName>HIRA-interacting protein 4</fullName>
    </alternativeName>
    <alternativeName>
        <fullName>Renal carcinoma antigen NY-REN-14</fullName>
    </alternativeName>
</protein>
<organism>
    <name type="scientific">Homo sapiens</name>
    <name type="common">Human</name>
    <dbReference type="NCBI Taxonomy" id="9606"/>
    <lineage>
        <taxon>Eukaryota</taxon>
        <taxon>Metazoa</taxon>
        <taxon>Chordata</taxon>
        <taxon>Craniata</taxon>
        <taxon>Vertebrata</taxon>
        <taxon>Euteleostomi</taxon>
        <taxon>Mammalia</taxon>
        <taxon>Eutheria</taxon>
        <taxon>Euarchontoglires</taxon>
        <taxon>Primates</taxon>
        <taxon>Haplorrhini</taxon>
        <taxon>Catarrhini</taxon>
        <taxon>Hominidae</taxon>
        <taxon>Homo</taxon>
    </lineage>
</organism>
<name>DNJA2_HUMAN</name>